<name>TRHO_ECO7I</name>
<feature type="chain" id="PRO_1000200359" description="tRNA uridine(34) hydroxylase">
    <location>
        <begin position="1"/>
        <end position="350"/>
    </location>
</feature>
<feature type="domain" description="Rhodanese" evidence="2">
    <location>
        <begin position="146"/>
        <end position="240"/>
    </location>
</feature>
<feature type="active site" description="Cysteine persulfide intermediate" evidence="2">
    <location>
        <position position="200"/>
    </location>
</feature>
<dbReference type="EC" id="1.14.-.-" evidence="2"/>
<dbReference type="EMBL" id="CU928164">
    <property type="protein sequence ID" value="CAR18236.1"/>
    <property type="molecule type" value="Genomic_DNA"/>
</dbReference>
<dbReference type="RefSeq" id="WP_001144616.1">
    <property type="nucleotide sequence ID" value="NC_011750.1"/>
</dbReference>
<dbReference type="RefSeq" id="YP_002408072.1">
    <property type="nucleotide sequence ID" value="NC_011750.1"/>
</dbReference>
<dbReference type="SMR" id="B7NL80"/>
<dbReference type="STRING" id="585057.ECIAI39_2109"/>
<dbReference type="KEGG" id="ect:ECIAI39_2109"/>
<dbReference type="PATRIC" id="fig|585057.6.peg.2191"/>
<dbReference type="HOGENOM" id="CLU_038878_1_1_6"/>
<dbReference type="Proteomes" id="UP000000749">
    <property type="component" value="Chromosome"/>
</dbReference>
<dbReference type="GO" id="GO:0016705">
    <property type="term" value="F:oxidoreductase activity, acting on paired donors, with incorporation or reduction of molecular oxygen"/>
    <property type="evidence" value="ECO:0007669"/>
    <property type="project" value="UniProtKB-UniRule"/>
</dbReference>
<dbReference type="GO" id="GO:0006400">
    <property type="term" value="P:tRNA modification"/>
    <property type="evidence" value="ECO:0007669"/>
    <property type="project" value="UniProtKB-UniRule"/>
</dbReference>
<dbReference type="CDD" id="cd01518">
    <property type="entry name" value="RHOD_YceA"/>
    <property type="match status" value="1"/>
</dbReference>
<dbReference type="Gene3D" id="3.30.70.100">
    <property type="match status" value="1"/>
</dbReference>
<dbReference type="Gene3D" id="3.40.250.10">
    <property type="entry name" value="Rhodanese-like domain"/>
    <property type="match status" value="1"/>
</dbReference>
<dbReference type="HAMAP" id="MF_00469">
    <property type="entry name" value="TrhO"/>
    <property type="match status" value="1"/>
</dbReference>
<dbReference type="InterPro" id="IPR001763">
    <property type="entry name" value="Rhodanese-like_dom"/>
</dbReference>
<dbReference type="InterPro" id="IPR036873">
    <property type="entry name" value="Rhodanese-like_dom_sf"/>
</dbReference>
<dbReference type="InterPro" id="IPR022111">
    <property type="entry name" value="Rhodanese_C"/>
</dbReference>
<dbReference type="InterPro" id="IPR020936">
    <property type="entry name" value="TrhO"/>
</dbReference>
<dbReference type="InterPro" id="IPR040503">
    <property type="entry name" value="TRHO_N"/>
</dbReference>
<dbReference type="NCBIfam" id="NF001133">
    <property type="entry name" value="PRK00142.1-1"/>
    <property type="match status" value="1"/>
</dbReference>
<dbReference type="PANTHER" id="PTHR43846:SF1">
    <property type="entry name" value="TRNA URIDINE(34) HYDROXYLASE"/>
    <property type="match status" value="1"/>
</dbReference>
<dbReference type="PANTHER" id="PTHR43846">
    <property type="entry name" value="UPF0176 PROTEIN YCEA"/>
    <property type="match status" value="1"/>
</dbReference>
<dbReference type="Pfam" id="PF00581">
    <property type="entry name" value="Rhodanese"/>
    <property type="match status" value="1"/>
</dbReference>
<dbReference type="Pfam" id="PF12368">
    <property type="entry name" value="Rhodanese_C"/>
    <property type="match status" value="1"/>
</dbReference>
<dbReference type="Pfam" id="PF17773">
    <property type="entry name" value="UPF0176_N"/>
    <property type="match status" value="1"/>
</dbReference>
<dbReference type="SMART" id="SM00450">
    <property type="entry name" value="RHOD"/>
    <property type="match status" value="1"/>
</dbReference>
<dbReference type="SUPFAM" id="SSF52821">
    <property type="entry name" value="Rhodanese/Cell cycle control phosphatase"/>
    <property type="match status" value="1"/>
</dbReference>
<dbReference type="PROSITE" id="PS50206">
    <property type="entry name" value="RHODANESE_3"/>
    <property type="match status" value="1"/>
</dbReference>
<protein>
    <recommendedName>
        <fullName evidence="2">tRNA uridine(34) hydroxylase</fullName>
        <ecNumber evidence="2">1.14.-.-</ecNumber>
    </recommendedName>
    <alternativeName>
        <fullName evidence="2">tRNA hydroxylation protein O</fullName>
    </alternativeName>
</protein>
<evidence type="ECO:0000250" key="1">
    <source>
        <dbReference type="UniProtKB" id="P24188"/>
    </source>
</evidence>
<evidence type="ECO:0000255" key="2">
    <source>
        <dbReference type="HAMAP-Rule" id="MF_00469"/>
    </source>
</evidence>
<proteinExistence type="inferred from homology"/>
<organism>
    <name type="scientific">Escherichia coli O7:K1 (strain IAI39 / ExPEC)</name>
    <dbReference type="NCBI Taxonomy" id="585057"/>
    <lineage>
        <taxon>Bacteria</taxon>
        <taxon>Pseudomonadati</taxon>
        <taxon>Pseudomonadota</taxon>
        <taxon>Gammaproteobacteria</taxon>
        <taxon>Enterobacterales</taxon>
        <taxon>Enterobacteriaceae</taxon>
        <taxon>Escherichia</taxon>
    </lineage>
</organism>
<reference key="1">
    <citation type="journal article" date="2009" name="PLoS Genet.">
        <title>Organised genome dynamics in the Escherichia coli species results in highly diverse adaptive paths.</title>
        <authorList>
            <person name="Touchon M."/>
            <person name="Hoede C."/>
            <person name="Tenaillon O."/>
            <person name="Barbe V."/>
            <person name="Baeriswyl S."/>
            <person name="Bidet P."/>
            <person name="Bingen E."/>
            <person name="Bonacorsi S."/>
            <person name="Bouchier C."/>
            <person name="Bouvet O."/>
            <person name="Calteau A."/>
            <person name="Chiapello H."/>
            <person name="Clermont O."/>
            <person name="Cruveiller S."/>
            <person name="Danchin A."/>
            <person name="Diard M."/>
            <person name="Dossat C."/>
            <person name="Karoui M.E."/>
            <person name="Frapy E."/>
            <person name="Garry L."/>
            <person name="Ghigo J.M."/>
            <person name="Gilles A.M."/>
            <person name="Johnson J."/>
            <person name="Le Bouguenec C."/>
            <person name="Lescat M."/>
            <person name="Mangenot S."/>
            <person name="Martinez-Jehanne V."/>
            <person name="Matic I."/>
            <person name="Nassif X."/>
            <person name="Oztas S."/>
            <person name="Petit M.A."/>
            <person name="Pichon C."/>
            <person name="Rouy Z."/>
            <person name="Ruf C.S."/>
            <person name="Schneider D."/>
            <person name="Tourret J."/>
            <person name="Vacherie B."/>
            <person name="Vallenet D."/>
            <person name="Medigue C."/>
            <person name="Rocha E.P.C."/>
            <person name="Denamur E."/>
        </authorList>
    </citation>
    <scope>NUCLEOTIDE SEQUENCE [LARGE SCALE GENOMIC DNA]</scope>
    <source>
        <strain>IAI39 / ExPEC</strain>
    </source>
</reference>
<gene>
    <name evidence="2" type="primary">trhO</name>
    <name type="synonym">yceA</name>
    <name type="ordered locus">ECIAI39_2109</name>
</gene>
<sequence>MPVLHNRISNDALKAKMLAESEPRTTISFYKYFHIADPKATRDALYQLFTALNVFGRVYLAHEGINAQISVPASNVETFRAQLYAFDPALEGLRLNIALDDDGKSFWVLRMKVRDRIVADGIDDPHFDASNVGEYLQAAEVNAMLDDPDALFIDMRNHYEYEVGHFENALEIPADTFREQLPKAVEMMQAHKDKKIVMYCTGGIRCEKASAWMKHNGFNKVWHIEGGIIEYARKAREQGLPVRFIGKNFVFDERMGERISDEIIAHCHQCGAPCDSHTNCKNDGCHLLFIQCPVCAEKYKGCCSEICCEESALPPEEQRRRRAGRENGNKIFNKSRGRLNTTLGIPDPTE</sequence>
<comment type="function">
    <text evidence="1">Catalyzes oxygen-dependent 5-hydroxyuridine (ho5U) modification at position 34 in tRNAs, the first step in 5-carboxymethoxyuridine (cmo5U) biosynthesis. May be part of an alternate pathway, which is able to bypass cmo5U biogenesis in a subset of tRNAs under aerobic conditions.</text>
</comment>
<comment type="catalytic activity">
    <reaction evidence="2">
        <text>uridine(34) in tRNA + AH2 + O2 = 5-hydroxyuridine(34) in tRNA + A + H2O</text>
        <dbReference type="Rhea" id="RHEA:64224"/>
        <dbReference type="Rhea" id="RHEA-COMP:11727"/>
        <dbReference type="Rhea" id="RHEA-COMP:13381"/>
        <dbReference type="ChEBI" id="CHEBI:13193"/>
        <dbReference type="ChEBI" id="CHEBI:15377"/>
        <dbReference type="ChEBI" id="CHEBI:15379"/>
        <dbReference type="ChEBI" id="CHEBI:17499"/>
        <dbReference type="ChEBI" id="CHEBI:65315"/>
        <dbReference type="ChEBI" id="CHEBI:136877"/>
    </reaction>
</comment>
<comment type="similarity">
    <text evidence="2">Belongs to the TrhO family.</text>
</comment>
<accession>B7NL80</accession>
<keyword id="KW-0560">Oxidoreductase</keyword>
<keyword id="KW-0819">tRNA processing</keyword>